<proteinExistence type="inferred from homology"/>
<evidence type="ECO:0000255" key="1">
    <source>
        <dbReference type="HAMAP-Rule" id="MF_00651"/>
    </source>
</evidence>
<reference key="1">
    <citation type="journal article" date="2013" name="Proc. Natl. Acad. Sci. U.S.A.">
        <title>Polynucleobacter necessarius, a model for genome reduction in both free-living and symbiotic bacteria.</title>
        <authorList>
            <person name="Boscaro V."/>
            <person name="Felletti M."/>
            <person name="Vannini C."/>
            <person name="Ackerman M.S."/>
            <person name="Chain P.S."/>
            <person name="Malfatti S."/>
            <person name="Vergez L.M."/>
            <person name="Shin M."/>
            <person name="Doak T.G."/>
            <person name="Lynch M."/>
            <person name="Petroni G."/>
        </authorList>
    </citation>
    <scope>NUCLEOTIDE SEQUENCE [LARGE SCALE GENOMIC DNA]</scope>
    <source>
        <strain>STIR1</strain>
    </source>
</reference>
<dbReference type="EC" id="3.1.-.-" evidence="1"/>
<dbReference type="EMBL" id="CP001010">
    <property type="protein sequence ID" value="ACB43560.1"/>
    <property type="molecule type" value="Genomic_DNA"/>
</dbReference>
<dbReference type="SMR" id="B1XT83"/>
<dbReference type="STRING" id="452638.Pnec_0265"/>
<dbReference type="KEGG" id="pne:Pnec_0265"/>
<dbReference type="eggNOG" id="COG0816">
    <property type="taxonomic scope" value="Bacteria"/>
</dbReference>
<dbReference type="HOGENOM" id="CLU_098240_3_2_4"/>
<dbReference type="OrthoDB" id="9796140at2"/>
<dbReference type="GO" id="GO:0005829">
    <property type="term" value="C:cytosol"/>
    <property type="evidence" value="ECO:0007669"/>
    <property type="project" value="TreeGrafter"/>
</dbReference>
<dbReference type="GO" id="GO:0004518">
    <property type="term" value="F:nuclease activity"/>
    <property type="evidence" value="ECO:0007669"/>
    <property type="project" value="UniProtKB-KW"/>
</dbReference>
<dbReference type="GO" id="GO:0000967">
    <property type="term" value="P:rRNA 5'-end processing"/>
    <property type="evidence" value="ECO:0007669"/>
    <property type="project" value="UniProtKB-UniRule"/>
</dbReference>
<dbReference type="CDD" id="cd16964">
    <property type="entry name" value="YqgF"/>
    <property type="match status" value="1"/>
</dbReference>
<dbReference type="Gene3D" id="3.30.420.140">
    <property type="entry name" value="YqgF/RNase H-like domain"/>
    <property type="match status" value="1"/>
</dbReference>
<dbReference type="HAMAP" id="MF_00651">
    <property type="entry name" value="Nuclease_YqgF"/>
    <property type="match status" value="1"/>
</dbReference>
<dbReference type="InterPro" id="IPR012337">
    <property type="entry name" value="RNaseH-like_sf"/>
</dbReference>
<dbReference type="InterPro" id="IPR005227">
    <property type="entry name" value="YqgF"/>
</dbReference>
<dbReference type="InterPro" id="IPR006641">
    <property type="entry name" value="YqgF/RNaseH-like_dom"/>
</dbReference>
<dbReference type="InterPro" id="IPR037027">
    <property type="entry name" value="YqgF/RNaseH-like_dom_sf"/>
</dbReference>
<dbReference type="NCBIfam" id="TIGR00250">
    <property type="entry name" value="RNAse_H_YqgF"/>
    <property type="match status" value="1"/>
</dbReference>
<dbReference type="PANTHER" id="PTHR33317">
    <property type="entry name" value="POLYNUCLEOTIDYL TRANSFERASE, RIBONUCLEASE H-LIKE SUPERFAMILY PROTEIN"/>
    <property type="match status" value="1"/>
</dbReference>
<dbReference type="PANTHER" id="PTHR33317:SF4">
    <property type="entry name" value="POLYNUCLEOTIDYL TRANSFERASE, RIBONUCLEASE H-LIKE SUPERFAMILY PROTEIN"/>
    <property type="match status" value="1"/>
</dbReference>
<dbReference type="Pfam" id="PF03652">
    <property type="entry name" value="RuvX"/>
    <property type="match status" value="1"/>
</dbReference>
<dbReference type="SMART" id="SM00732">
    <property type="entry name" value="YqgFc"/>
    <property type="match status" value="1"/>
</dbReference>
<dbReference type="SUPFAM" id="SSF53098">
    <property type="entry name" value="Ribonuclease H-like"/>
    <property type="match status" value="1"/>
</dbReference>
<gene>
    <name type="ordered locus">Pnec_0265</name>
</gene>
<keyword id="KW-0963">Cytoplasm</keyword>
<keyword id="KW-0378">Hydrolase</keyword>
<keyword id="KW-0540">Nuclease</keyword>
<keyword id="KW-0690">Ribosome biogenesis</keyword>
<organism>
    <name type="scientific">Polynucleobacter necessarius subsp. necessarius (strain STIR1)</name>
    <dbReference type="NCBI Taxonomy" id="452638"/>
    <lineage>
        <taxon>Bacteria</taxon>
        <taxon>Pseudomonadati</taxon>
        <taxon>Pseudomonadota</taxon>
        <taxon>Betaproteobacteria</taxon>
        <taxon>Burkholderiales</taxon>
        <taxon>Burkholderiaceae</taxon>
        <taxon>Polynucleobacter</taxon>
    </lineage>
</organism>
<sequence>MLKPMALITPITAMAFDYGTRRVGVAVGNSVTKAGEPLKTIAAPNSDTLFKDIEQLLAEWQPNQLVVGHPTHPDGAPHEMTAKAIRFGNQLHGRFQLPVAWVDERYTSAVLEGDAQMRDNLDAHSATLILEQYFSELDTNLNTKAAD</sequence>
<comment type="function">
    <text evidence="1">Could be a nuclease involved in processing of the 5'-end of pre-16S rRNA.</text>
</comment>
<comment type="subcellular location">
    <subcellularLocation>
        <location evidence="1">Cytoplasm</location>
    </subcellularLocation>
</comment>
<comment type="similarity">
    <text evidence="1">Belongs to the YqgF nuclease family.</text>
</comment>
<feature type="chain" id="PRO_1000131055" description="Putative pre-16S rRNA nuclease">
    <location>
        <begin position="1"/>
        <end position="147"/>
    </location>
</feature>
<protein>
    <recommendedName>
        <fullName evidence="1">Putative pre-16S rRNA nuclease</fullName>
        <ecNumber evidence="1">3.1.-.-</ecNumber>
    </recommendedName>
</protein>
<accession>B1XT83</accession>
<name>YQGF_POLNS</name>